<reference key="1">
    <citation type="journal article" date="1996" name="Appl. Microbiol. Biotechnol.">
        <title>The multidomain xylanase A of the hyperthermophilic bacterium Thermotoga neapolitana is extremely thermoresistant.</title>
        <authorList>
            <person name="Zverlov V."/>
            <person name="Piotukh K."/>
            <person name="Dakhova O."/>
            <person name="Velikodvorskaya G."/>
            <person name="Borriss R."/>
        </authorList>
    </citation>
    <scope>NUCLEOTIDE SEQUENCE [GENOMIC DNA]</scope>
    <source>
        <strain>Z2706-MC24</strain>
    </source>
</reference>
<sequence length="1055" mass="119323">MRKKRRGFLNASTAVLVGILAGFLGVVLAATGALGFAVRESLLLKQFLFLSFEGNTDGASPFGKDVVVTASQDVAADGEYSLKVENRTSVWDGVEIDLTGKVNTGTDYLLSFHVYQTSDSPQLFSVLARTEDEKGERYKILADKVVVPNYWKEILVPFSPTFEGTPAKFSLIITSPKKTDFVFYVDNVQVLTPKEAGPKVVYETSFEKGIGDWQPRGSDVKISISPKVAHSGKKSLFVSNRQKGWHGAQISLKGILKTGKTYAFEAWVYQESGQDQTIIMTMQRKYSSDSSTKYEWIKAATVPSGQWVQLSGTYTIPAGVTVEDLTLYFESQNPTLEFYVDDVKVVDTTSAEIKLEMNPEEEIPALKDVLKDYFRVGVALPSKVFINQKDIALISKHSNSSTAENEMKPDSLLAGIENGKLKFRFETADKYIEFAQQNGMVVRGHTLVWHNQTPEWFFKDENGNLLSKEEMTERLREYIHTVVGHFKGKVYAWDVVNEAVDPNQPDGLRRSTWYQIMGPDYIELAFKFAREADPNAKLFYNDYNTFEPKKRDIIYNLVKSLKEKGLIDGIGMQCHISLATDIRQIEEAIKKFSTIPGIEIHITELDISVYRDSTSNYSEAPRTALIEQAHKMAQLFKIFKKYSNVITNVTFWGLKDDYSWRATRRNDWPLIFDKDYQAKLAYWAIVAPEVLPPLPKESKISEGEAVVVGMMDDSYMMSKPIEIYDEEGNVKATIRAIWKDSTIYVYGEVQDATKKPAEDGVAIFINPNNERTPYLQPDDTYVVLWTNWKSEVNREDVEVKKFVGPGFRRYSFEMSITIPGVEFKKDSYIGFDVAVIDDGKWYSWSDTTNSQKTNTMNYGTLKLEGVMVATAKYGTPVIDGEIDDIWNTTEEIETKSVAMGSLEKNATAKVRVLWDEENLYVLAIVKDPVLNKDNSNPWEQDSVEIFIDENNHKTGYYEDDDAQFRVNYMNEQSFGTGASAARFKTAVKLIEGGYIVEAAIKWKTIKPSPNTVIGFNVQVNDANEKGQRVGIISWSDPTNNSWRDPSKFGNLRLIK</sequence>
<dbReference type="EC" id="3.2.1.8"/>
<dbReference type="EMBL" id="Z46945">
    <property type="protein sequence ID" value="CAA87069.1"/>
    <property type="molecule type" value="Genomic_DNA"/>
</dbReference>
<dbReference type="SMR" id="Q60042"/>
<dbReference type="CAZy" id="CBM22">
    <property type="family name" value="Carbohydrate-Binding Module Family 22"/>
</dbReference>
<dbReference type="CAZy" id="CBM9">
    <property type="family name" value="Carbohydrate-Binding Module Family 9"/>
</dbReference>
<dbReference type="CAZy" id="GH10">
    <property type="family name" value="Glycoside Hydrolase Family 10"/>
</dbReference>
<dbReference type="GO" id="GO:0030246">
    <property type="term" value="F:carbohydrate binding"/>
    <property type="evidence" value="ECO:0007669"/>
    <property type="project" value="InterPro"/>
</dbReference>
<dbReference type="GO" id="GO:0031176">
    <property type="term" value="F:endo-1,4-beta-xylanase activity"/>
    <property type="evidence" value="ECO:0007669"/>
    <property type="project" value="UniProtKB-EC"/>
</dbReference>
<dbReference type="GO" id="GO:0045493">
    <property type="term" value="P:xylan catabolic process"/>
    <property type="evidence" value="ECO:0007669"/>
    <property type="project" value="UniProtKB-KW"/>
</dbReference>
<dbReference type="CDD" id="cd00005">
    <property type="entry name" value="CBM9_like_1"/>
    <property type="match status" value="1"/>
</dbReference>
<dbReference type="CDD" id="cd00241">
    <property type="entry name" value="DOMON_like"/>
    <property type="match status" value="1"/>
</dbReference>
<dbReference type="Gene3D" id="2.60.40.1190">
    <property type="match status" value="2"/>
</dbReference>
<dbReference type="Gene3D" id="2.60.120.260">
    <property type="entry name" value="Galactose-binding domain-like"/>
    <property type="match status" value="2"/>
</dbReference>
<dbReference type="Gene3D" id="3.20.20.80">
    <property type="entry name" value="Glycosidases"/>
    <property type="match status" value="1"/>
</dbReference>
<dbReference type="InterPro" id="IPR010502">
    <property type="entry name" value="Carb-bd_dom_fam9"/>
</dbReference>
<dbReference type="InterPro" id="IPR003305">
    <property type="entry name" value="CenC_carb-bd"/>
</dbReference>
<dbReference type="InterPro" id="IPR008979">
    <property type="entry name" value="Galactose-bd-like_sf"/>
</dbReference>
<dbReference type="InterPro" id="IPR044846">
    <property type="entry name" value="GH10"/>
</dbReference>
<dbReference type="InterPro" id="IPR031158">
    <property type="entry name" value="GH10_AS"/>
</dbReference>
<dbReference type="InterPro" id="IPR001000">
    <property type="entry name" value="GH10_dom"/>
</dbReference>
<dbReference type="InterPro" id="IPR017853">
    <property type="entry name" value="Glycoside_hydrolase_SF"/>
</dbReference>
<dbReference type="InterPro" id="IPR006311">
    <property type="entry name" value="TAT_signal"/>
</dbReference>
<dbReference type="PANTHER" id="PTHR31490:SF90">
    <property type="entry name" value="ENDO-1,4-BETA-XYLANASE A"/>
    <property type="match status" value="1"/>
</dbReference>
<dbReference type="PANTHER" id="PTHR31490">
    <property type="entry name" value="GLYCOSYL HYDROLASE"/>
    <property type="match status" value="1"/>
</dbReference>
<dbReference type="Pfam" id="PF06452">
    <property type="entry name" value="CBM9_1"/>
    <property type="match status" value="2"/>
</dbReference>
<dbReference type="Pfam" id="PF02018">
    <property type="entry name" value="CBM_4_9"/>
    <property type="match status" value="2"/>
</dbReference>
<dbReference type="Pfam" id="PF00331">
    <property type="entry name" value="Glyco_hydro_10"/>
    <property type="match status" value="1"/>
</dbReference>
<dbReference type="PRINTS" id="PR00134">
    <property type="entry name" value="GLHYDRLASE10"/>
</dbReference>
<dbReference type="SMART" id="SM00633">
    <property type="entry name" value="Glyco_10"/>
    <property type="match status" value="1"/>
</dbReference>
<dbReference type="SUPFAM" id="SSF51445">
    <property type="entry name" value="(Trans)glycosidases"/>
    <property type="match status" value="1"/>
</dbReference>
<dbReference type="SUPFAM" id="SSF49344">
    <property type="entry name" value="CBD9-like"/>
    <property type="match status" value="2"/>
</dbReference>
<dbReference type="SUPFAM" id="SSF49785">
    <property type="entry name" value="Galactose-binding domain-like"/>
    <property type="match status" value="2"/>
</dbReference>
<dbReference type="PROSITE" id="PS00591">
    <property type="entry name" value="GH10_1"/>
    <property type="match status" value="1"/>
</dbReference>
<dbReference type="PROSITE" id="PS51760">
    <property type="entry name" value="GH10_2"/>
    <property type="match status" value="1"/>
</dbReference>
<dbReference type="PROSITE" id="PS51318">
    <property type="entry name" value="TAT"/>
    <property type="match status" value="1"/>
</dbReference>
<feature type="signal peptide" evidence="2">
    <location>
        <begin position="1"/>
        <end position="29"/>
    </location>
</feature>
<feature type="chain" id="PRO_0000007987" description="Endo-1,4-beta-xylanase A">
    <location>
        <begin position="30"/>
        <end position="1055"/>
    </location>
</feature>
<feature type="domain" description="GH10" evidence="3">
    <location>
        <begin position="360"/>
        <end position="688"/>
    </location>
</feature>
<feature type="domain" description="CBM-cenC 1">
    <location>
        <begin position="720"/>
        <end position="851"/>
    </location>
</feature>
<feature type="domain" description="CBM-cenC 2">
    <location>
        <begin position="895"/>
        <end position="1040"/>
    </location>
</feature>
<feature type="region of interest" description="A">
    <location>
        <begin position="30"/>
        <end position="357"/>
    </location>
</feature>
<feature type="active site" description="Proton donor" evidence="1">
    <location>
        <position position="498"/>
    </location>
</feature>
<feature type="active site" description="Nucleophile" evidence="4">
    <location>
        <position position="604"/>
    </location>
</feature>
<accession>Q60042</accession>
<keyword id="KW-0119">Carbohydrate metabolism</keyword>
<keyword id="KW-0326">Glycosidase</keyword>
<keyword id="KW-0378">Hydrolase</keyword>
<keyword id="KW-0624">Polysaccharide degradation</keyword>
<keyword id="KW-0677">Repeat</keyword>
<keyword id="KW-0732">Signal</keyword>
<keyword id="KW-0858">Xylan degradation</keyword>
<organism>
    <name type="scientific">Thermotoga neapolitana</name>
    <dbReference type="NCBI Taxonomy" id="2337"/>
    <lineage>
        <taxon>Bacteria</taxon>
        <taxon>Thermotogati</taxon>
        <taxon>Thermotogota</taxon>
        <taxon>Thermotogae</taxon>
        <taxon>Thermotogales</taxon>
        <taxon>Thermotogaceae</taxon>
        <taxon>Thermotoga</taxon>
    </lineage>
</organism>
<protein>
    <recommendedName>
        <fullName>Endo-1,4-beta-xylanase A</fullName>
        <shortName>Xylanase A</shortName>
        <ecNumber>3.2.1.8</ecNumber>
    </recommendedName>
    <alternativeName>
        <fullName>1,4-beta-D-xylan xylanohydrolase A</fullName>
    </alternativeName>
    <alternativeName>
        <fullName>Endoxylanase</fullName>
    </alternativeName>
</protein>
<comment type="catalytic activity">
    <reaction>
        <text>Endohydrolysis of (1-&gt;4)-beta-D-xylosidic linkages in xylans.</text>
        <dbReference type="EC" id="3.2.1.8"/>
    </reaction>
</comment>
<comment type="biophysicochemical properties">
    <phDependence>
        <text>Optimum pH is 5.5-6.</text>
    </phDependence>
    <temperatureDependence>
        <text>Optimum temperature is 102 degrees Celsius. Thermostable.</text>
    </temperatureDependence>
</comment>
<comment type="domain">
    <text evidence="1">The C-terminal CBM-CenC domains mediate the binding of XynA to microcrystalline cellulose. CBM-CenC 2 alone can also promote cellulose binding (By similarity).</text>
</comment>
<comment type="similarity">
    <text evidence="5">Belongs to the glycosyl hydrolase 10 (cellulase F) family.</text>
</comment>
<evidence type="ECO:0000250" key="1"/>
<evidence type="ECO:0000255" key="2"/>
<evidence type="ECO:0000255" key="3">
    <source>
        <dbReference type="PROSITE-ProRule" id="PRU01096"/>
    </source>
</evidence>
<evidence type="ECO:0000255" key="4">
    <source>
        <dbReference type="PROSITE-ProRule" id="PRU10061"/>
    </source>
</evidence>
<evidence type="ECO:0000305" key="5"/>
<gene>
    <name type="primary">xynA</name>
</gene>
<name>XYNA_THENE</name>
<proteinExistence type="evidence at protein level"/>